<comment type="function">
    <text evidence="1">Multifunctional enzyme that converts the viral RNA genome into dsDNA in viral cytoplasmic capsids. This enzyme displays a DNA polymerase activity that can copy either DNA or RNA templates, and a ribonuclease H (RNase H) activity that cleaves the RNA strand of RNA-DNA heteroduplexes in a partially processive 3'- to 5'-endonucleasic mode. Neo-synthesized pregenomic RNA (pgRNA) are encapsidated together with the P protein, and reverse-transcribed inside the nucleocapsid. Initiation of reverse-transcription occurs first by binding the epsilon loop on the pgRNA genome, and is initiated by protein priming, thereby the 5'-end of (-)DNA is covalently linked to P protein. Partial (+)DNA is synthesized from the (-)DNA template and generates the relaxed circular DNA (RC-DNA) genome. After budding and infection, the RC-DNA migrates in the nucleus, and is converted into a plasmid-like covalently closed circular DNA (cccDNA). The activity of P protein does not seem to be necessary for cccDNA generation, and is presumably released from (+)DNA by host nuclear DNA repair machinery.</text>
</comment>
<comment type="catalytic activity">
    <reaction evidence="1">
        <text>DNA(n) + a 2'-deoxyribonucleoside 5'-triphosphate = DNA(n+1) + diphosphate</text>
        <dbReference type="Rhea" id="RHEA:22508"/>
        <dbReference type="Rhea" id="RHEA-COMP:17339"/>
        <dbReference type="Rhea" id="RHEA-COMP:17340"/>
        <dbReference type="ChEBI" id="CHEBI:33019"/>
        <dbReference type="ChEBI" id="CHEBI:61560"/>
        <dbReference type="ChEBI" id="CHEBI:173112"/>
        <dbReference type="EC" id="2.7.7.7"/>
    </reaction>
</comment>
<comment type="catalytic activity">
    <reaction evidence="1">
        <text>DNA(n) + a 2'-deoxyribonucleoside 5'-triphosphate = DNA(n+1) + diphosphate</text>
        <dbReference type="Rhea" id="RHEA:22508"/>
        <dbReference type="Rhea" id="RHEA-COMP:17339"/>
        <dbReference type="Rhea" id="RHEA-COMP:17340"/>
        <dbReference type="ChEBI" id="CHEBI:33019"/>
        <dbReference type="ChEBI" id="CHEBI:61560"/>
        <dbReference type="ChEBI" id="CHEBI:173112"/>
        <dbReference type="EC" id="2.7.7.49"/>
    </reaction>
</comment>
<comment type="catalytic activity">
    <reaction evidence="1">
        <text>Endonucleolytic cleavage to 5'-phosphomonoester.</text>
        <dbReference type="EC" id="3.1.26.4"/>
    </reaction>
</comment>
<comment type="activity regulation">
    <text evidence="1">Activated by host HSP70 and HSP40 in vitro to be able to bind the epsilon loop of the pgRNA. Because deletion of the RNase H region renders the protein partly chaperone-independent, the chaperones may be needed indirectly to relieve occlusion of the RNA-binding site by this domain. Inhibited by several reverse-transcriptase inhibitors: Lamivudine, Adefovir and Entecavir.</text>
</comment>
<comment type="domain">
    <text evidence="1">Terminal protein domain (TP) is hepadnavirus-specific. Spacer domain is highly variable and separates the TP and RT domains. Polymerase/reverse-transcriptase domain (RT) and ribonuclease H domain (RH) are similar to retrovirus reverse transcriptase/RNase H.</text>
</comment>
<comment type="domain">
    <text evidence="1">The polymerase/reverse transcriptase (RT) and ribonuclease H (RH) domains are structured in five subdomains: finger, palm, thumb, connection and RNase H. Within the palm subdomain, the 'primer grip' region is thought to be involved in the positioning of the primer terminus for accommodating the incoming nucleotide. The RH domain stabilizes the association of RT with primer-template.</text>
</comment>
<comment type="miscellaneous">
    <text evidence="1">Hepadnaviral virions contain probably just one P protein molecule per particle.</text>
</comment>
<comment type="similarity">
    <text evidence="1">Belongs to the hepadnaviridae P protein family.</text>
</comment>
<evidence type="ECO:0000255" key="1">
    <source>
        <dbReference type="HAMAP-Rule" id="MF_04073"/>
    </source>
</evidence>
<evidence type="ECO:0000256" key="2">
    <source>
        <dbReference type="SAM" id="MobiDB-lite"/>
    </source>
</evidence>
<organismHost>
    <name type="scientific">Homo sapiens</name>
    <name type="common">Human</name>
    <dbReference type="NCBI Taxonomy" id="9606"/>
</organismHost>
<organismHost>
    <name type="scientific">Pan troglodytes</name>
    <name type="common">Chimpanzee</name>
    <dbReference type="NCBI Taxonomy" id="9598"/>
</organismHost>
<proteinExistence type="inferred from homology"/>
<feature type="chain" id="PRO_0000323273" description="Protein P">
    <location>
        <begin position="1"/>
        <end position="842"/>
    </location>
</feature>
<feature type="domain" description="Reverse transcriptase" evidence="1">
    <location>
        <begin position="356"/>
        <end position="599"/>
    </location>
</feature>
<feature type="region of interest" description="Terminal protein domain (TP)" evidence="1">
    <location>
        <begin position="1"/>
        <end position="177"/>
    </location>
</feature>
<feature type="region of interest" description="Spacer" evidence="1">
    <location>
        <begin position="178"/>
        <end position="345"/>
    </location>
</feature>
<feature type="region of interest" description="Disordered" evidence="2">
    <location>
        <begin position="186"/>
        <end position="273"/>
    </location>
</feature>
<feature type="region of interest" description="Polymerase/reverse transcriptase domain (RT)" evidence="1">
    <location>
        <begin position="346"/>
        <end position="689"/>
    </location>
</feature>
<feature type="compositionally biased region" description="Polar residues" evidence="2">
    <location>
        <begin position="223"/>
        <end position="239"/>
    </location>
</feature>
<feature type="binding site" evidence="1">
    <location>
        <position position="428"/>
    </location>
    <ligand>
        <name>Mg(2+)</name>
        <dbReference type="ChEBI" id="CHEBI:18420"/>
        <note>catalytic</note>
    </ligand>
</feature>
<feature type="binding site" evidence="1">
    <location>
        <position position="550"/>
    </location>
    <ligand>
        <name>Mg(2+)</name>
        <dbReference type="ChEBI" id="CHEBI:18420"/>
        <note>catalytic</note>
    </ligand>
</feature>
<feature type="binding site" evidence="1">
    <location>
        <position position="551"/>
    </location>
    <ligand>
        <name>Mg(2+)</name>
        <dbReference type="ChEBI" id="CHEBI:18420"/>
        <note>catalytic</note>
    </ligand>
</feature>
<feature type="site" description="Priming of reverse-transcription by covalently linking the first nucleotide of the (-)DNA" evidence="1">
    <location>
        <position position="63"/>
    </location>
</feature>
<accession>Q80IU4</accession>
<sequence length="842" mass="94645">MPLSYQHFRRILLLDEEAGPLEEELPRLADEDLNRRVAEDLNLQLPNVSIPWTHKVGNFSGLYSSTIPVFNPHWKTPSFPDIHLHQDIINKCEQFVGPLTVNEKRRLNLVMPARFFPISTKYLPLEKGIKPYYPDNVVNHYFQTRHYLHTLWKAGILYKRETTRSASFCGSPYSWEQELHHGAFLDGPSRMGEESFHHQSSGIFSRPPVGSSIQSKHQKSRLGPQSQQRPLDRSQQGRSGSIRAGVHSPTRRPFGVEPSGSRHAKNIASRSASCLHQSAVRKAAYPNHSTFERHSSSGHAVEFHNIPPSSAGSQSKRPVFSCWWLQFRNSEPCSDYCLSHLVNLLEDWGPCTEHGRHHIRIPRTPARVTGGVFLVDKNPHNTAESRLVVDFSQFSRGSSRVSWPKFAVPNLQSLTNLLSSNLSWLSLDVSAAFYHLPLHPAAMPHLLVGSSGLSRYVARLSSNSRIINHHYGTLPNLHDSCSRNLYVSLMLLFKTFGRKLHLYSHPIIMGFRKIPMGVGLSPFLLAQFTSAICSVVRRAFPHCLAFSYMDDVVLGAKSVQHLESLYTSVTNFLLSLGIHLNPNKTKRWGYSLNFMGYVIGSWGSLPQEHIRIKIKDCFRKLPVNRPIDWKVCQRIVGLLGFAAPFTQCGYPALMPLYACIQSKQAFTFSPTYKAFLCKQYLNLYPVARQRPGLCQVFADATPTGWGLAIGHQRMRGTFVAPLPIHTAELLAACFARSRSGAKLIGTDNSVVLSRKYTSFPWLLGCAANWILRGTSFVYVPSALNPADDPSRGRLGVCRPLLRLPFQPTTGRTSLYAVSPSVPSHLPDRVHFASPLHVAWRPP</sequence>
<gene>
    <name evidence="1" type="primary">P</name>
</gene>
<keyword id="KW-0235">DNA replication</keyword>
<keyword id="KW-0238">DNA-binding</keyword>
<keyword id="KW-0239">DNA-directed DNA polymerase</keyword>
<keyword id="KW-0255">Endonuclease</keyword>
<keyword id="KW-0945">Host-virus interaction</keyword>
<keyword id="KW-0378">Hydrolase</keyword>
<keyword id="KW-1090">Inhibition of host innate immune response by virus</keyword>
<keyword id="KW-1113">Inhibition of host RLR pathway by virus</keyword>
<keyword id="KW-0460">Magnesium</keyword>
<keyword id="KW-0479">Metal-binding</keyword>
<keyword id="KW-0511">Multifunctional enzyme</keyword>
<keyword id="KW-0540">Nuclease</keyword>
<keyword id="KW-0548">Nucleotidyltransferase</keyword>
<keyword id="KW-0695">RNA-directed DNA polymerase</keyword>
<keyword id="KW-0808">Transferase</keyword>
<keyword id="KW-0899">Viral immunoevasion</keyword>
<reference key="1">
    <citation type="submission" date="2002-09" db="EMBL/GenBank/DDBJ databases">
        <title>Distribution of Hepatitis B Virus (HBV) genotypes among HBV carriers in Cote d'Ivoire: complete genome sequence and phylogenetic relatedness of HBV genotype E.</title>
        <authorList>
            <person name="Suzuki S."/>
            <person name="Sugauchi F."/>
            <person name="Orito E."/>
            <person name="Kato H."/>
            <person name="Usuda S."/>
            <person name="Siransy L."/>
            <person name="Arita I."/>
            <person name="Sakamoto Y."/>
            <person name="Yoshihara N."/>
            <person name="El-Gohary A."/>
            <person name="Ueda R."/>
            <person name="Mizokami M."/>
        </authorList>
    </citation>
    <scope>NUCLEOTIDE SEQUENCE [GENOMIC DNA]</scope>
</reference>
<reference key="2">
    <citation type="journal article" date="2007" name="World J. Gastroenterol.">
        <title>Hepatitis B virus replication.</title>
        <authorList>
            <person name="Beck J."/>
            <person name="Nassal M."/>
        </authorList>
    </citation>
    <scope>REVIEW</scope>
</reference>
<dbReference type="EC" id="2.7.7.7" evidence="1"/>
<dbReference type="EC" id="2.7.7.49" evidence="1"/>
<dbReference type="EC" id="3.1.26.4" evidence="1"/>
<dbReference type="EMBL" id="AB091256">
    <property type="protein sequence ID" value="BAC65108.1"/>
    <property type="molecule type" value="Genomic_DNA"/>
</dbReference>
<dbReference type="Proteomes" id="UP000002445">
    <property type="component" value="Genome"/>
</dbReference>
<dbReference type="GO" id="GO:0003677">
    <property type="term" value="F:DNA binding"/>
    <property type="evidence" value="ECO:0007669"/>
    <property type="project" value="UniProtKB-UniRule"/>
</dbReference>
<dbReference type="GO" id="GO:0003887">
    <property type="term" value="F:DNA-directed DNA polymerase activity"/>
    <property type="evidence" value="ECO:0007669"/>
    <property type="project" value="UniProtKB-UniRule"/>
</dbReference>
<dbReference type="GO" id="GO:0046872">
    <property type="term" value="F:metal ion binding"/>
    <property type="evidence" value="ECO:0007669"/>
    <property type="project" value="UniProtKB-UniRule"/>
</dbReference>
<dbReference type="GO" id="GO:0003964">
    <property type="term" value="F:RNA-directed DNA polymerase activity"/>
    <property type="evidence" value="ECO:0007669"/>
    <property type="project" value="UniProtKB-UniRule"/>
</dbReference>
<dbReference type="GO" id="GO:0004523">
    <property type="term" value="F:RNA-DNA hybrid ribonuclease activity"/>
    <property type="evidence" value="ECO:0007669"/>
    <property type="project" value="UniProtKB-UniRule"/>
</dbReference>
<dbReference type="GO" id="GO:0006260">
    <property type="term" value="P:DNA replication"/>
    <property type="evidence" value="ECO:0007669"/>
    <property type="project" value="UniProtKB-UniRule"/>
</dbReference>
<dbReference type="GO" id="GO:0052170">
    <property type="term" value="P:symbiont-mediated suppression of host innate immune response"/>
    <property type="evidence" value="ECO:0007669"/>
    <property type="project" value="UniProtKB-UniRule"/>
</dbReference>
<dbReference type="FunFam" id="3.30.70.270:FF:000009">
    <property type="entry name" value="Protein P"/>
    <property type="match status" value="1"/>
</dbReference>
<dbReference type="Gene3D" id="3.30.70.270">
    <property type="match status" value="1"/>
</dbReference>
<dbReference type="HAMAP" id="MF_04073">
    <property type="entry name" value="HBV_DPOL"/>
    <property type="match status" value="1"/>
</dbReference>
<dbReference type="InterPro" id="IPR043502">
    <property type="entry name" value="DNA/RNA_pol_sf"/>
</dbReference>
<dbReference type="InterPro" id="IPR001462">
    <property type="entry name" value="DNApol_viral_C"/>
</dbReference>
<dbReference type="InterPro" id="IPR000201">
    <property type="entry name" value="DNApol_viral_N"/>
</dbReference>
<dbReference type="InterPro" id="IPR037531">
    <property type="entry name" value="HBV_DPOL"/>
</dbReference>
<dbReference type="InterPro" id="IPR052055">
    <property type="entry name" value="Hepadnavirus_pol/RT"/>
</dbReference>
<dbReference type="InterPro" id="IPR043128">
    <property type="entry name" value="Rev_trsase/Diguanyl_cyclase"/>
</dbReference>
<dbReference type="InterPro" id="IPR000477">
    <property type="entry name" value="RT_dom"/>
</dbReference>
<dbReference type="PANTHER" id="PTHR33050">
    <property type="entry name" value="REVERSE TRANSCRIPTASE DOMAIN-CONTAINING PROTEIN"/>
    <property type="match status" value="1"/>
</dbReference>
<dbReference type="PANTHER" id="PTHR33050:SF7">
    <property type="entry name" value="RIBONUCLEASE H"/>
    <property type="match status" value="1"/>
</dbReference>
<dbReference type="Pfam" id="PF00336">
    <property type="entry name" value="DNA_pol_viral_C"/>
    <property type="match status" value="1"/>
</dbReference>
<dbReference type="Pfam" id="PF00242">
    <property type="entry name" value="DNA_pol_viral_N"/>
    <property type="match status" value="1"/>
</dbReference>
<dbReference type="Pfam" id="PF00078">
    <property type="entry name" value="RVT_1"/>
    <property type="match status" value="1"/>
</dbReference>
<dbReference type="SUPFAM" id="SSF56672">
    <property type="entry name" value="DNA/RNA polymerases"/>
    <property type="match status" value="1"/>
</dbReference>
<dbReference type="PROSITE" id="PS50878">
    <property type="entry name" value="RT_POL"/>
    <property type="match status" value="1"/>
</dbReference>
<name>DPOL_HBVE4</name>
<protein>
    <recommendedName>
        <fullName evidence="1">Protein P</fullName>
    </recommendedName>
    <domain>
        <recommendedName>
            <fullName evidence="1">DNA-directed DNA polymerase</fullName>
            <ecNumber evidence="1">2.7.7.7</ecNumber>
        </recommendedName>
    </domain>
    <domain>
        <recommendedName>
            <fullName evidence="1">RNA-directed DNA polymerase</fullName>
            <ecNumber evidence="1">2.7.7.49</ecNumber>
        </recommendedName>
    </domain>
    <domain>
        <recommendedName>
            <fullName evidence="1">Ribonuclease H</fullName>
            <ecNumber evidence="1">3.1.26.4</ecNumber>
        </recommendedName>
    </domain>
</protein>
<organism>
    <name type="scientific">Hepatitis B virus genotype E (isolate Cote d'Ivoire/ABI-212/2003)</name>
    <name type="common">HBV-E</name>
    <dbReference type="NCBI Taxonomy" id="489498"/>
    <lineage>
        <taxon>Viruses</taxon>
        <taxon>Riboviria</taxon>
        <taxon>Pararnavirae</taxon>
        <taxon>Artverviricota</taxon>
        <taxon>Revtraviricetes</taxon>
        <taxon>Blubervirales</taxon>
        <taxon>Hepadnaviridae</taxon>
        <taxon>Orthohepadnavirus</taxon>
        <taxon>Hepatitis B virus</taxon>
        <taxon>hepatitis B virus genotype E</taxon>
    </lineage>
</organism>